<sequence>MVNLRNAVHSFLVHLIGLLVWQSDISVSPVAAIVTDIFNTSDGGRFKFPDGVQNWPALSIVIIIIMTIGGNILVIMAVSMEKKLHNATNYFLMSLAIADMLVGLLVMPLSLLAILYDYVWPLPRYLCPVWISLDVLFSTASIMHLCAISLDRYVAIRNPIEHSRFNSRTKAIMKIAIVWAISIGVSVPIPVIGLRDEEKVFVNNTTCVLNDPNFVLIGSFVAFFIPLTIMVITYCLTIYVLRRQALMLLHGHTEEPPGLSLDFLKCCKRNTAEEENSANPNQDQNARRRKKKERRPRGTMQAINNERKASKVLGIVFFVFLIMWCPFFITNILSVLCEKSCNQKLMEKLLNVFVWIGYVCSGINPLVYTLFNKIYRRAFSNYLRCNYKVEKKPPVRQIPRVAATALSGRELNVNIYRHTNEPVIEKASDNEPGIEMQVENLELPVNPSSVVSERISSV</sequence>
<gene>
    <name evidence="29" type="primary">HTR2C</name>
    <name type="synonym">HTR1C</name>
</gene>
<comment type="function">
    <text evidence="1 10 16 17 19 21">G-protein coupled receptor for 5-hydroxytryptamine (serotonin) (PubMed:12970106, PubMed:18703043, PubMed:19057895, PubMed:29398112, PubMed:7895773). Also functions as a receptor for various drugs and psychoactive substances, including ergot alkaloid derivatives, 1-2,5,-dimethoxy-4-iodophenyl-2-aminopropane (DOI) and lysergic acid diethylamide (LSD) (PubMed:19057895, PubMed:29398112). Ligand binding causes a conformation change that triggers signaling via guanine nucleotide-binding proteins (G proteins) and modulates the activity of downstream effectors (PubMed:18703043, PubMed:29398112). HTR2C is coupled to G(q)/G(11) G alpha proteins and activates phospholipase C-beta, releasing diacylglycerol (DAG) and inositol 1,4,5-trisphosphate (IP3) second messengers that modulate the activity of phosphatidylinositol 3-kinase and promote the release of Ca(2+) ions from intracellular stores, respectively (PubMed:18703043, PubMed:29398112). Beta-arrestin family members inhibit signaling via G proteins and mediate activation of alternative signaling pathways (PubMed:29398112). Regulates neuronal activity via the activation of short transient receptor potential calcium channels in the brain, and thereby modulates the activation of pro-opiomelanocortin neurons and the release of CRH that then regulates the release of corticosterone (By similarity). Plays a role in the regulation of appetite and eating behavior, responses to anxiogenic stimuli and stress (By similarity). Plays a role in insulin sensitivity and glucose homeostasis (By similarity).</text>
</comment>
<comment type="activity regulation">
    <text evidence="19">Inhibited by inverse agonist ritanserin.</text>
</comment>
<comment type="subunit">
    <text evidence="9 12 13 14">Interacts with MPDZ (PubMed:11150294). Interacts with ARRB2 (PubMed:16319069). Interacts with MPP3; this interaction stabilizes the receptor at the plasma membrane and prevents the desensitization of the HTR2C receptor-mediated calcium response (PubMed:14988405, PubMed:16914526).</text>
</comment>
<comment type="interaction">
    <interactant intactId="EBI-994141">
        <id>P28335</id>
    </interactant>
    <interactant intactId="EBI-12172273">
        <id>O95406</id>
        <label>CNIH1</label>
    </interactant>
    <organismsDiffer>false</organismsDiffer>
    <experiments>3</experiments>
</comment>
<comment type="interaction">
    <interactant intactId="EBI-994141">
        <id>P28335</id>
    </interactant>
    <interactant intactId="EBI-4319440">
        <id>P54849</id>
        <label>EMP1</label>
    </interactant>
    <organismsDiffer>false</organismsDiffer>
    <experiments>3</experiments>
</comment>
<comment type="interaction">
    <interactant intactId="EBI-994141">
        <id>P28335</id>
    </interactant>
    <interactant intactId="EBI-6656333">
        <id>P28223</id>
        <label>HTR2A</label>
    </interactant>
    <organismsDiffer>false</organismsDiffer>
    <experiments>5</experiments>
</comment>
<comment type="interaction">
    <interactant intactId="EBI-994141">
        <id>P28335</id>
    </interactant>
    <interactant intactId="EBI-7474947">
        <id>P41595</id>
        <label>HTR2B</label>
    </interactant>
    <organismsDiffer>false</organismsDiffer>
    <experiments>4</experiments>
</comment>
<comment type="interaction">
    <interactant intactId="EBI-994141">
        <id>P28335</id>
    </interactant>
    <interactant intactId="EBI-994141">
        <id>P28335</id>
        <label>HTR2C</label>
    </interactant>
    <organismsDiffer>false</organismsDiffer>
    <experiments>9</experiments>
</comment>
<comment type="interaction">
    <interactant intactId="EBI-994141">
        <id>P28335</id>
    </interactant>
    <interactant intactId="EBI-1188341">
        <id>P49286</id>
        <label>MTNR1B</label>
    </interactant>
    <organismsDiffer>false</organismsDiffer>
    <experiments>3</experiments>
</comment>
<comment type="interaction">
    <interactant intactId="EBI-994141">
        <id>P28335</id>
    </interactant>
    <interactant intactId="EBI-2823239">
        <id>Q9NUM3</id>
        <label>SLC39A9</label>
    </interactant>
    <organismsDiffer>false</organismsDiffer>
    <experiments>3</experiments>
</comment>
<comment type="interaction">
    <interactant intactId="EBI-994141">
        <id>P28335</id>
    </interactant>
    <interactant intactId="EBI-1045825">
        <id>P55061</id>
        <label>TMBIM6</label>
    </interactant>
    <organismsDiffer>false</organismsDiffer>
    <experiments>3</experiments>
</comment>
<comment type="interaction">
    <interactant intactId="EBI-994141">
        <id>P28335</id>
    </interactant>
    <interactant intactId="EBI-348587">
        <id>Q9BVK8</id>
        <label>TMEM147</label>
    </interactant>
    <organismsDiffer>false</organismsDiffer>
    <experiments>5</experiments>
</comment>
<comment type="interaction">
    <interactant intactId="EBI-21299643">
        <id>P28335-1</id>
    </interactant>
    <interactant intactId="EBI-15573967">
        <id>P28223-1</id>
        <label>HTR2A</label>
    </interactant>
    <organismsDiffer>false</organismsDiffer>
    <experiments>3</experiments>
</comment>
<comment type="subcellular location">
    <subcellularLocation>
        <location evidence="10 16 17 21">Cell membrane</location>
        <topology evidence="10 16 17 21">Multi-pass membrane protein</topology>
    </subcellularLocation>
</comment>
<comment type="alternative products">
    <event type="alternative splicing"/>
    <isoform>
        <id>P28335-1</id>
        <name>1</name>
        <sequence type="displayed"/>
    </isoform>
    <isoform>
        <id>P28335-2</id>
        <name>2</name>
        <sequence type="described" ref="VSP_045171"/>
    </isoform>
</comment>
<comment type="tissue specificity">
    <text evidence="22">Detected in brain.</text>
</comment>
<comment type="domain">
    <text evidence="9">The PDZ domain-binding motif is involved in the interaction with MPDZ.</text>
</comment>
<comment type="PTM">
    <text evidence="9">N-glycosylated.</text>
</comment>
<comment type="RNA editing">
    <location>
        <position position="156" evidence="23"/>
    </location>
    <location>
        <position position="158" evidence="23"/>
    </location>
    <location>
        <position position="160" evidence="23"/>
    </location>
    <text>Partially edited. RNA editing generates receptor isoforms that differ in their ability to interact with the phospholipase C signaling cascade in a transfected cell line, suggesting that this RNA processing event may contribute to the modulation of serotonergic neurotransmission in the central nervous system.</text>
</comment>
<comment type="similarity">
    <text evidence="4">Belongs to the G-protein coupled receptor 1 family.</text>
</comment>
<accession>P28335</accession>
<accession>B1AMW4</accession>
<accession>Q5VUF8</accession>
<accession>Q9NP28</accession>
<keyword id="KW-0002">3D-structure</keyword>
<keyword id="KW-0025">Alternative splicing</keyword>
<keyword id="KW-0085">Behavior</keyword>
<keyword id="KW-1003">Cell membrane</keyword>
<keyword id="KW-1015">Disulfide bond</keyword>
<keyword id="KW-0297">G-protein coupled receptor</keyword>
<keyword id="KW-0325">Glycoprotein</keyword>
<keyword id="KW-0472">Membrane</keyword>
<keyword id="KW-0675">Receptor</keyword>
<keyword id="KW-1185">Reference proteome</keyword>
<keyword id="KW-0691">RNA editing</keyword>
<keyword id="KW-0732">Signal</keyword>
<keyword id="KW-0807">Transducer</keyword>
<keyword id="KW-0812">Transmembrane</keyword>
<keyword id="KW-1133">Transmembrane helix</keyword>
<evidence type="ECO:0000250" key="1">
    <source>
        <dbReference type="UniProtKB" id="P34968"/>
    </source>
</evidence>
<evidence type="ECO:0000250" key="2">
    <source>
        <dbReference type="UniProtKB" id="P41595"/>
    </source>
</evidence>
<evidence type="ECO:0000255" key="3">
    <source>
        <dbReference type="PROSITE-ProRule" id="PRU00498"/>
    </source>
</evidence>
<evidence type="ECO:0000255" key="4">
    <source>
        <dbReference type="PROSITE-ProRule" id="PRU00521"/>
    </source>
</evidence>
<evidence type="ECO:0000256" key="5">
    <source>
        <dbReference type="SAM" id="MobiDB-lite"/>
    </source>
</evidence>
<evidence type="ECO:0000269" key="6">
    <source>
    </source>
</evidence>
<evidence type="ECO:0000269" key="7">
    <source>
    </source>
</evidence>
<evidence type="ECO:0000269" key="8">
    <source>
    </source>
</evidence>
<evidence type="ECO:0000269" key="9">
    <source>
    </source>
</evidence>
<evidence type="ECO:0000269" key="10">
    <source>
    </source>
</evidence>
<evidence type="ECO:0000269" key="11">
    <source>
    </source>
</evidence>
<evidence type="ECO:0000269" key="12">
    <source>
    </source>
</evidence>
<evidence type="ECO:0000269" key="13">
    <source>
    </source>
</evidence>
<evidence type="ECO:0000269" key="14">
    <source>
    </source>
</evidence>
<evidence type="ECO:0000269" key="15">
    <source>
    </source>
</evidence>
<evidence type="ECO:0000269" key="16">
    <source>
    </source>
</evidence>
<evidence type="ECO:0000269" key="17">
    <source>
    </source>
</evidence>
<evidence type="ECO:0000269" key="18">
    <source>
    </source>
</evidence>
<evidence type="ECO:0000269" key="19">
    <source>
    </source>
</evidence>
<evidence type="ECO:0000269" key="20">
    <source>
    </source>
</evidence>
<evidence type="ECO:0000269" key="21">
    <source>
    </source>
</evidence>
<evidence type="ECO:0000269" key="22">
    <source>
    </source>
</evidence>
<evidence type="ECO:0000269" key="23">
    <source>
    </source>
</evidence>
<evidence type="ECO:0000269" key="24">
    <source ref="5"/>
</evidence>
<evidence type="ECO:0000303" key="25">
    <source>
    </source>
</evidence>
<evidence type="ECO:0000303" key="26">
    <source>
    </source>
</evidence>
<evidence type="ECO:0000303" key="27">
    <source>
    </source>
</evidence>
<evidence type="ECO:0000305" key="28"/>
<evidence type="ECO:0000312" key="29">
    <source>
        <dbReference type="HGNC" id="HGNC:5295"/>
    </source>
</evidence>
<evidence type="ECO:0000312" key="30">
    <source>
        <dbReference type="PDB" id="6BQG"/>
    </source>
</evidence>
<evidence type="ECO:0007744" key="31">
    <source>
        <dbReference type="PDB" id="6BQG"/>
    </source>
</evidence>
<evidence type="ECO:0007744" key="32">
    <source>
        <dbReference type="PDB" id="6BQH"/>
    </source>
</evidence>
<evidence type="ECO:0007829" key="33">
    <source>
        <dbReference type="PDB" id="6BQG"/>
    </source>
</evidence>
<evidence type="ECO:0007829" key="34">
    <source>
        <dbReference type="PDB" id="6BQH"/>
    </source>
</evidence>
<evidence type="ECO:0007829" key="35">
    <source>
        <dbReference type="PDB" id="8DPF"/>
    </source>
</evidence>
<protein>
    <recommendedName>
        <fullName evidence="28">5-hydroxytryptamine receptor 2C</fullName>
        <shortName evidence="27">5-HT-2C</shortName>
        <shortName evidence="27">5-HT2C</shortName>
        <shortName evidence="27">5-HTR2C</shortName>
    </recommendedName>
    <alternativeName>
        <fullName evidence="26">5-hydroxytryptamine receptor 1C</fullName>
        <shortName evidence="26">5-HT-1C</shortName>
        <shortName evidence="26">5-HT1C</shortName>
    </alternativeName>
    <alternativeName>
        <fullName evidence="27">Serotonin receptor 2C</fullName>
    </alternativeName>
</protein>
<proteinExistence type="evidence at protein level"/>
<reference key="1">
    <citation type="journal article" date="1991" name="Biochem. Biophys. Res. Commun.">
        <title>Cloning of the human serotonin 5-HT2 and 5-HT1C receptor subtypes.</title>
        <authorList>
            <person name="Saltzman A.G."/>
            <person name="Morse B."/>
            <person name="Whitman M.M."/>
            <person name="Ivanshchenko Y."/>
            <person name="Jaye M."/>
            <person name="Felder S."/>
        </authorList>
    </citation>
    <scope>NUCLEOTIDE SEQUENCE [MRNA] (ISOFORM 1)</scope>
    <scope>VARIANT CYS-23</scope>
    <source>
        <tissue>Brain</tissue>
    </source>
</reference>
<reference key="2">
    <citation type="journal article" date="1994" name="Eur. J. Pharmacol.">
        <title>Genomic organisation and functional expression of the gene encoding the human serotonin 5-HT2C receptor.</title>
        <authorList>
            <person name="Stam N.J."/>
            <person name="Vanderheyden P."/>
            <person name="Van Alebeek C."/>
            <person name="Klomp J."/>
            <person name="De Boer T."/>
            <person name="Van Delft A.M.L."/>
            <person name="Olijve W."/>
        </authorList>
    </citation>
    <scope>NUCLEOTIDE SEQUENCE [GENOMIC DNA]</scope>
    <scope>FUNCTION</scope>
    <scope>SUBCELLULAR LOCATION</scope>
    <scope>VARIANT CYS-23</scope>
    <source>
        <tissue>Hippocampus</tissue>
        <tissue>Placenta</tissue>
    </source>
</reference>
<reference key="3">
    <citation type="journal article" date="1996" name="Genomics">
        <title>The human serotonin 5-HT2C receptor: complete cDNA, genomic structure, and alternatively spliced variant.</title>
        <authorList>
            <person name="Xie E."/>
            <person name="Zhao L."/>
            <person name="Levine A.J."/>
            <person name="Shenk T."/>
            <person name="Chang L.-S."/>
        </authorList>
    </citation>
    <scope>NUCLEOTIDE SEQUENCE [MRNA] (ISOFORM 1)</scope>
    <scope>TISSUE SPECIFICITY</scope>
    <scope>VARIANT CYS-23</scope>
    <source>
        <tissue>Brain</tissue>
    </source>
</reference>
<reference key="4">
    <citation type="journal article" date="1998" name="Ann. N. Y. Acad. Sci.">
        <title>Identification and characterization of RNA editing events within the 5-HT2C receptor.</title>
        <authorList>
            <person name="Niswender C.M."/>
            <person name="Sanders-Bush E."/>
            <person name="Emeson R.B."/>
        </authorList>
    </citation>
    <scope>NUCLEOTIDE SEQUENCE [MRNA] (ISOFORM 1)</scope>
    <scope>RNA EDITING OF POSITIONS 156; 158 AND 160</scope>
    <scope>VARIANT CYS-23</scope>
    <source>
        <tissue>Brain</tissue>
    </source>
</reference>
<reference key="5">
    <citation type="submission" date="2002-04" db="EMBL/GenBank/DDBJ databases">
        <title>cDNA clones of human proteins involved in signal transduction sequenced by the Guthrie cDNA resource center (www.cdna.org).</title>
        <authorList>
            <person name="Puhl H.L. III"/>
            <person name="Ikeda S.R."/>
            <person name="Aronstam R.S."/>
        </authorList>
    </citation>
    <scope>NUCLEOTIDE SEQUENCE [LARGE SCALE MRNA] (ISOFORM 1)</scope>
    <scope>VARIANT CYS-23</scope>
    <source>
        <tissue>Brain</tissue>
    </source>
</reference>
<reference key="6">
    <citation type="journal article" date="2004" name="Nat. Genet.">
        <title>Complete sequencing and characterization of 21,243 full-length human cDNAs.</title>
        <authorList>
            <person name="Ota T."/>
            <person name="Suzuki Y."/>
            <person name="Nishikawa T."/>
            <person name="Otsuki T."/>
            <person name="Sugiyama T."/>
            <person name="Irie R."/>
            <person name="Wakamatsu A."/>
            <person name="Hayashi K."/>
            <person name="Sato H."/>
            <person name="Nagai K."/>
            <person name="Kimura K."/>
            <person name="Makita H."/>
            <person name="Sekine M."/>
            <person name="Obayashi M."/>
            <person name="Nishi T."/>
            <person name="Shibahara T."/>
            <person name="Tanaka T."/>
            <person name="Ishii S."/>
            <person name="Yamamoto J."/>
            <person name="Saito K."/>
            <person name="Kawai Y."/>
            <person name="Isono Y."/>
            <person name="Nakamura Y."/>
            <person name="Nagahari K."/>
            <person name="Murakami K."/>
            <person name="Yasuda T."/>
            <person name="Iwayanagi T."/>
            <person name="Wagatsuma M."/>
            <person name="Shiratori A."/>
            <person name="Sudo H."/>
            <person name="Hosoiri T."/>
            <person name="Kaku Y."/>
            <person name="Kodaira H."/>
            <person name="Kondo H."/>
            <person name="Sugawara M."/>
            <person name="Takahashi M."/>
            <person name="Kanda K."/>
            <person name="Yokoi T."/>
            <person name="Furuya T."/>
            <person name="Kikkawa E."/>
            <person name="Omura Y."/>
            <person name="Abe K."/>
            <person name="Kamihara K."/>
            <person name="Katsuta N."/>
            <person name="Sato K."/>
            <person name="Tanikawa M."/>
            <person name="Yamazaki M."/>
            <person name="Ninomiya K."/>
            <person name="Ishibashi T."/>
            <person name="Yamashita H."/>
            <person name="Murakawa K."/>
            <person name="Fujimori K."/>
            <person name="Tanai H."/>
            <person name="Kimata M."/>
            <person name="Watanabe M."/>
            <person name="Hiraoka S."/>
            <person name="Chiba Y."/>
            <person name="Ishida S."/>
            <person name="Ono Y."/>
            <person name="Takiguchi S."/>
            <person name="Watanabe S."/>
            <person name="Yosida M."/>
            <person name="Hotuta T."/>
            <person name="Kusano J."/>
            <person name="Kanehori K."/>
            <person name="Takahashi-Fujii A."/>
            <person name="Hara H."/>
            <person name="Tanase T.-O."/>
            <person name="Nomura Y."/>
            <person name="Togiya S."/>
            <person name="Komai F."/>
            <person name="Hara R."/>
            <person name="Takeuchi K."/>
            <person name="Arita M."/>
            <person name="Imose N."/>
            <person name="Musashino K."/>
            <person name="Yuuki H."/>
            <person name="Oshima A."/>
            <person name="Sasaki N."/>
            <person name="Aotsuka S."/>
            <person name="Yoshikawa Y."/>
            <person name="Matsunawa H."/>
            <person name="Ichihara T."/>
            <person name="Shiohata N."/>
            <person name="Sano S."/>
            <person name="Moriya S."/>
            <person name="Momiyama H."/>
            <person name="Satoh N."/>
            <person name="Takami S."/>
            <person name="Terashima Y."/>
            <person name="Suzuki O."/>
            <person name="Nakagawa S."/>
            <person name="Senoh A."/>
            <person name="Mizoguchi H."/>
            <person name="Goto Y."/>
            <person name="Shimizu F."/>
            <person name="Wakebe H."/>
            <person name="Hishigaki H."/>
            <person name="Watanabe T."/>
            <person name="Sugiyama A."/>
            <person name="Takemoto M."/>
            <person name="Kawakami B."/>
            <person name="Yamazaki M."/>
            <person name="Watanabe K."/>
            <person name="Kumagai A."/>
            <person name="Itakura S."/>
            <person name="Fukuzumi Y."/>
            <person name="Fujimori Y."/>
            <person name="Komiyama M."/>
            <person name="Tashiro H."/>
            <person name="Tanigami A."/>
            <person name="Fujiwara T."/>
            <person name="Ono T."/>
            <person name="Yamada K."/>
            <person name="Fujii Y."/>
            <person name="Ozaki K."/>
            <person name="Hirao M."/>
            <person name="Ohmori Y."/>
            <person name="Kawabata A."/>
            <person name="Hikiji T."/>
            <person name="Kobatake N."/>
            <person name="Inagaki H."/>
            <person name="Ikema Y."/>
            <person name="Okamoto S."/>
            <person name="Okitani R."/>
            <person name="Kawakami T."/>
            <person name="Noguchi S."/>
            <person name="Itoh T."/>
            <person name="Shigeta K."/>
            <person name="Senba T."/>
            <person name="Matsumura K."/>
            <person name="Nakajima Y."/>
            <person name="Mizuno T."/>
            <person name="Morinaga M."/>
            <person name="Sasaki M."/>
            <person name="Togashi T."/>
            <person name="Oyama M."/>
            <person name="Hata H."/>
            <person name="Watanabe M."/>
            <person name="Komatsu T."/>
            <person name="Mizushima-Sugano J."/>
            <person name="Satoh T."/>
            <person name="Shirai Y."/>
            <person name="Takahashi Y."/>
            <person name="Nakagawa K."/>
            <person name="Okumura K."/>
            <person name="Nagase T."/>
            <person name="Nomura N."/>
            <person name="Kikuchi H."/>
            <person name="Masuho Y."/>
            <person name="Yamashita R."/>
            <person name="Nakai K."/>
            <person name="Yada T."/>
            <person name="Nakamura Y."/>
            <person name="Ohara O."/>
            <person name="Isogai T."/>
            <person name="Sugano S."/>
        </authorList>
    </citation>
    <scope>NUCLEOTIDE SEQUENCE [LARGE SCALE MRNA] (ISOFORM 2)</scope>
    <scope>VARIANT CYS-23</scope>
    <source>
        <tissue>Hippocampus</tissue>
    </source>
</reference>
<reference key="7">
    <citation type="journal article" date="2005" name="Nature">
        <title>The DNA sequence of the human X chromosome.</title>
        <authorList>
            <person name="Ross M.T."/>
            <person name="Grafham D.V."/>
            <person name="Coffey A.J."/>
            <person name="Scherer S."/>
            <person name="McLay K."/>
            <person name="Muzny D."/>
            <person name="Platzer M."/>
            <person name="Howell G.R."/>
            <person name="Burrows C."/>
            <person name="Bird C.P."/>
            <person name="Frankish A."/>
            <person name="Lovell F.L."/>
            <person name="Howe K.L."/>
            <person name="Ashurst J.L."/>
            <person name="Fulton R.S."/>
            <person name="Sudbrak R."/>
            <person name="Wen G."/>
            <person name="Jones M.C."/>
            <person name="Hurles M.E."/>
            <person name="Andrews T.D."/>
            <person name="Scott C.E."/>
            <person name="Searle S."/>
            <person name="Ramser J."/>
            <person name="Whittaker A."/>
            <person name="Deadman R."/>
            <person name="Carter N.P."/>
            <person name="Hunt S.E."/>
            <person name="Chen R."/>
            <person name="Cree A."/>
            <person name="Gunaratne P."/>
            <person name="Havlak P."/>
            <person name="Hodgson A."/>
            <person name="Metzker M.L."/>
            <person name="Richards S."/>
            <person name="Scott G."/>
            <person name="Steffen D."/>
            <person name="Sodergren E."/>
            <person name="Wheeler D.A."/>
            <person name="Worley K.C."/>
            <person name="Ainscough R."/>
            <person name="Ambrose K.D."/>
            <person name="Ansari-Lari M.A."/>
            <person name="Aradhya S."/>
            <person name="Ashwell R.I."/>
            <person name="Babbage A.K."/>
            <person name="Bagguley C.L."/>
            <person name="Ballabio A."/>
            <person name="Banerjee R."/>
            <person name="Barker G.E."/>
            <person name="Barlow K.F."/>
            <person name="Barrett I.P."/>
            <person name="Bates K.N."/>
            <person name="Beare D.M."/>
            <person name="Beasley H."/>
            <person name="Beasley O."/>
            <person name="Beck A."/>
            <person name="Bethel G."/>
            <person name="Blechschmidt K."/>
            <person name="Brady N."/>
            <person name="Bray-Allen S."/>
            <person name="Bridgeman A.M."/>
            <person name="Brown A.J."/>
            <person name="Brown M.J."/>
            <person name="Bonnin D."/>
            <person name="Bruford E.A."/>
            <person name="Buhay C."/>
            <person name="Burch P."/>
            <person name="Burford D."/>
            <person name="Burgess J."/>
            <person name="Burrill W."/>
            <person name="Burton J."/>
            <person name="Bye J.M."/>
            <person name="Carder C."/>
            <person name="Carrel L."/>
            <person name="Chako J."/>
            <person name="Chapman J.C."/>
            <person name="Chavez D."/>
            <person name="Chen E."/>
            <person name="Chen G."/>
            <person name="Chen Y."/>
            <person name="Chen Z."/>
            <person name="Chinault C."/>
            <person name="Ciccodicola A."/>
            <person name="Clark S.Y."/>
            <person name="Clarke G."/>
            <person name="Clee C.M."/>
            <person name="Clegg S."/>
            <person name="Clerc-Blankenburg K."/>
            <person name="Clifford K."/>
            <person name="Cobley V."/>
            <person name="Cole C.G."/>
            <person name="Conquer J.S."/>
            <person name="Corby N."/>
            <person name="Connor R.E."/>
            <person name="David R."/>
            <person name="Davies J."/>
            <person name="Davis C."/>
            <person name="Davis J."/>
            <person name="Delgado O."/>
            <person name="Deshazo D."/>
            <person name="Dhami P."/>
            <person name="Ding Y."/>
            <person name="Dinh H."/>
            <person name="Dodsworth S."/>
            <person name="Draper H."/>
            <person name="Dugan-Rocha S."/>
            <person name="Dunham A."/>
            <person name="Dunn M."/>
            <person name="Durbin K.J."/>
            <person name="Dutta I."/>
            <person name="Eades T."/>
            <person name="Ellwood M."/>
            <person name="Emery-Cohen A."/>
            <person name="Errington H."/>
            <person name="Evans K.L."/>
            <person name="Faulkner L."/>
            <person name="Francis F."/>
            <person name="Frankland J."/>
            <person name="Fraser A.E."/>
            <person name="Galgoczy P."/>
            <person name="Gilbert J."/>
            <person name="Gill R."/>
            <person name="Gloeckner G."/>
            <person name="Gregory S.G."/>
            <person name="Gribble S."/>
            <person name="Griffiths C."/>
            <person name="Grocock R."/>
            <person name="Gu Y."/>
            <person name="Gwilliam R."/>
            <person name="Hamilton C."/>
            <person name="Hart E.A."/>
            <person name="Hawes A."/>
            <person name="Heath P.D."/>
            <person name="Heitmann K."/>
            <person name="Hennig S."/>
            <person name="Hernandez J."/>
            <person name="Hinzmann B."/>
            <person name="Ho S."/>
            <person name="Hoffs M."/>
            <person name="Howden P.J."/>
            <person name="Huckle E.J."/>
            <person name="Hume J."/>
            <person name="Hunt P.J."/>
            <person name="Hunt A.R."/>
            <person name="Isherwood J."/>
            <person name="Jacob L."/>
            <person name="Johnson D."/>
            <person name="Jones S."/>
            <person name="de Jong P.J."/>
            <person name="Joseph S.S."/>
            <person name="Keenan S."/>
            <person name="Kelly S."/>
            <person name="Kershaw J.K."/>
            <person name="Khan Z."/>
            <person name="Kioschis P."/>
            <person name="Klages S."/>
            <person name="Knights A.J."/>
            <person name="Kosiura A."/>
            <person name="Kovar-Smith C."/>
            <person name="Laird G.K."/>
            <person name="Langford C."/>
            <person name="Lawlor S."/>
            <person name="Leversha M."/>
            <person name="Lewis L."/>
            <person name="Liu W."/>
            <person name="Lloyd C."/>
            <person name="Lloyd D.M."/>
            <person name="Loulseged H."/>
            <person name="Loveland J.E."/>
            <person name="Lovell J.D."/>
            <person name="Lozado R."/>
            <person name="Lu J."/>
            <person name="Lyne R."/>
            <person name="Ma J."/>
            <person name="Maheshwari M."/>
            <person name="Matthews L.H."/>
            <person name="McDowall J."/>
            <person name="McLaren S."/>
            <person name="McMurray A."/>
            <person name="Meidl P."/>
            <person name="Meitinger T."/>
            <person name="Milne S."/>
            <person name="Miner G."/>
            <person name="Mistry S.L."/>
            <person name="Morgan M."/>
            <person name="Morris S."/>
            <person name="Mueller I."/>
            <person name="Mullikin J.C."/>
            <person name="Nguyen N."/>
            <person name="Nordsiek G."/>
            <person name="Nyakatura G."/>
            <person name="O'dell C.N."/>
            <person name="Okwuonu G."/>
            <person name="Palmer S."/>
            <person name="Pandian R."/>
            <person name="Parker D."/>
            <person name="Parrish J."/>
            <person name="Pasternak S."/>
            <person name="Patel D."/>
            <person name="Pearce A.V."/>
            <person name="Pearson D.M."/>
            <person name="Pelan S.E."/>
            <person name="Perez L."/>
            <person name="Porter K.M."/>
            <person name="Ramsey Y."/>
            <person name="Reichwald K."/>
            <person name="Rhodes S."/>
            <person name="Ridler K.A."/>
            <person name="Schlessinger D."/>
            <person name="Schueler M.G."/>
            <person name="Sehra H.K."/>
            <person name="Shaw-Smith C."/>
            <person name="Shen H."/>
            <person name="Sheridan E.M."/>
            <person name="Shownkeen R."/>
            <person name="Skuce C.D."/>
            <person name="Smith M.L."/>
            <person name="Sotheran E.C."/>
            <person name="Steingruber H.E."/>
            <person name="Steward C.A."/>
            <person name="Storey R."/>
            <person name="Swann R.M."/>
            <person name="Swarbreck D."/>
            <person name="Tabor P.E."/>
            <person name="Taudien S."/>
            <person name="Taylor T."/>
            <person name="Teague B."/>
            <person name="Thomas K."/>
            <person name="Thorpe A."/>
            <person name="Timms K."/>
            <person name="Tracey A."/>
            <person name="Trevanion S."/>
            <person name="Tromans A.C."/>
            <person name="d'Urso M."/>
            <person name="Verduzco D."/>
            <person name="Villasana D."/>
            <person name="Waldron L."/>
            <person name="Wall M."/>
            <person name="Wang Q."/>
            <person name="Warren J."/>
            <person name="Warry G.L."/>
            <person name="Wei X."/>
            <person name="West A."/>
            <person name="Whitehead S.L."/>
            <person name="Whiteley M.N."/>
            <person name="Wilkinson J.E."/>
            <person name="Willey D.L."/>
            <person name="Williams G."/>
            <person name="Williams L."/>
            <person name="Williamson A."/>
            <person name="Williamson H."/>
            <person name="Wilming L."/>
            <person name="Woodmansey R.L."/>
            <person name="Wray P.W."/>
            <person name="Yen J."/>
            <person name="Zhang J."/>
            <person name="Zhou J."/>
            <person name="Zoghbi H."/>
            <person name="Zorilla S."/>
            <person name="Buck D."/>
            <person name="Reinhardt R."/>
            <person name="Poustka A."/>
            <person name="Rosenthal A."/>
            <person name="Lehrach H."/>
            <person name="Meindl A."/>
            <person name="Minx P.J."/>
            <person name="Hillier L.W."/>
            <person name="Willard H.F."/>
            <person name="Wilson R.K."/>
            <person name="Waterston R.H."/>
            <person name="Rice C.M."/>
            <person name="Vaudin M."/>
            <person name="Coulson A."/>
            <person name="Nelson D.L."/>
            <person name="Weinstock G."/>
            <person name="Sulston J.E."/>
            <person name="Durbin R.M."/>
            <person name="Hubbard T."/>
            <person name="Gibbs R.A."/>
            <person name="Beck S."/>
            <person name="Rogers J."/>
            <person name="Bentley D.R."/>
        </authorList>
    </citation>
    <scope>NUCLEOTIDE SEQUENCE [LARGE SCALE GENOMIC DNA]</scope>
</reference>
<reference key="8">
    <citation type="journal article" date="2004" name="Genome Res.">
        <title>The status, quality, and expansion of the NIH full-length cDNA project: the Mammalian Gene Collection (MGC).</title>
        <authorList>
            <consortium name="The MGC Project Team"/>
        </authorList>
    </citation>
    <scope>NUCLEOTIDE SEQUENCE [LARGE SCALE MRNA] (ISOFORM 1)</scope>
    <scope>VARIANT CYS-23</scope>
</reference>
<reference key="9">
    <citation type="journal article" date="2001" name="J. Biol. Chem.">
        <title>Interaction of serotonin 5-hydroxytryptamine type 2C receptors with PDZ10 of the multi-PDZ domain protein MUPP1.</title>
        <authorList>
            <person name="Becamel C."/>
            <person name="Figge A."/>
            <person name="Poliak S."/>
            <person name="Dumuis A."/>
            <person name="Peles E."/>
            <person name="Bockaert J."/>
            <person name="Luebbert H."/>
            <person name="Ullmer C."/>
        </authorList>
    </citation>
    <scope>INTERACTION WITH MPDZ</scope>
    <scope>DOMAIN</scope>
    <scope>MUTAGENESIS OF SER-456; SER-457 AND VAL-458</scope>
    <scope>GLYCOSYLATION</scope>
</reference>
<reference key="10">
    <citation type="journal article" date="2003" name="Br. J. Pharmacol.">
        <title>Agonist actions of dihydroergotamine at 5-HT2B and 5-HT2C receptors and their possible relevance to antimigraine efficacy.</title>
        <authorList>
            <person name="Schaerlinger B."/>
            <person name="Hickel P."/>
            <person name="Etienne N."/>
            <person name="Guesnier L."/>
            <person name="Maroteaux L."/>
        </authorList>
    </citation>
    <scope>FUNCTION</scope>
    <scope>SUBCELLULAR LOCATION</scope>
</reference>
<reference key="11">
    <citation type="journal article" date="2004" name="J. Biol. Chem.">
        <title>The serotonin 5-HT2A and 5-HT2C receptors interact with specific sets of PDZ proteins.</title>
        <authorList>
            <person name="Becamel C."/>
            <person name="Gavarini S."/>
            <person name="Chanrion B."/>
            <person name="Alonso G."/>
            <person name="Galeotti N."/>
            <person name="Dumuis A."/>
            <person name="Bockaert J."/>
            <person name="Marin P."/>
        </authorList>
    </citation>
    <scope>INTERACTION WITH MPP3</scope>
</reference>
<reference key="12">
    <citation type="journal article" date="2006" name="J. Biol. Chem.">
        <title>A beta-arrestin binding determinant common to the second intracellular loops of rhodopsin family G protein-coupled receptors.</title>
        <authorList>
            <person name="Marion S."/>
            <person name="Oakley R.H."/>
            <person name="Kim K.-M."/>
            <person name="Caron M.G."/>
            <person name="Barak L.S."/>
        </authorList>
    </citation>
    <scope>INTERACTION WITH ARRB2</scope>
    <scope>MUTAGENESIS OF PRO-159</scope>
</reference>
<reference key="13">
    <citation type="journal article" date="2006" name="Mol. Biol. Cell">
        <title>Opposite effects of PSD-95 and MPP3 PDZ proteins on serotonin 5-hydroxytryptamine2C receptor desensitization and membrane stability.</title>
        <authorList>
            <person name="Gavarini S."/>
            <person name="Becamel C."/>
            <person name="Altier C."/>
            <person name="Lory P."/>
            <person name="Poncet J."/>
            <person name="Wijnholds J."/>
            <person name="Bockaert J."/>
            <person name="Marin P."/>
        </authorList>
    </citation>
    <scope>INTERACTION WITH MPP3</scope>
</reference>
<reference key="14">
    <citation type="journal article" date="2008" name="Eur. J. Pharmacol.">
        <title>Agonist-directed trafficking of signalling at serotonin 5-HT2A, 5-HT2B and 5-HT2C-VSV receptors mediated Gq/11 activation and calcium mobilisation in CHO cells.</title>
        <authorList>
            <person name="Cussac D."/>
            <person name="Boutet-Robinet E."/>
            <person name="Ailhaud M.C."/>
            <person name="Newman-Tancredi A."/>
            <person name="Martel J.C."/>
            <person name="Danty N."/>
            <person name="Rauly-Lestienne I."/>
        </authorList>
    </citation>
    <scope>FUNCTION</scope>
    <scope>SUBCELLULAR LOCATION</scope>
</reference>
<reference key="15">
    <citation type="journal article" date="2009" name="Naunyn Schmiedebergs Arch. Pharmacol.">
        <title>Pharmacological characterization of mitogen-activated protein kinase activation by recombinant human 5-HT2C, 5-HT2A, and 5-HT2B receptors.</title>
        <authorList>
            <person name="Knauer C.S."/>
            <person name="Campbell J.E."/>
            <person name="Chio C.L."/>
            <person name="Fitzgerald L.W."/>
        </authorList>
    </citation>
    <scope>FUNCTION</scope>
    <scope>SUBCELLULAR LOCATION</scope>
</reference>
<reference key="16">
    <citation type="journal article" date="2011" name="Physiol. Res.">
        <title>Serotonin receptors - from molecular biology to clinical applications.</title>
        <authorList>
            <person name="Pytliak M."/>
            <person name="Vargova V."/>
            <person name="Mechirova V."/>
            <person name="Felsoci M."/>
        </authorList>
    </citation>
    <scope>REVIEW</scope>
</reference>
<reference key="17">
    <citation type="journal article" date="2012" name="Eur. J. Pharmacol.">
        <title>The N-terminal region of the human 5-HT(2)C receptor has as a cleavable signal peptide.</title>
        <authorList>
            <person name="Jahnsen J.A."/>
            <person name="Uhlen S."/>
        </authorList>
    </citation>
    <scope>SIGNAL SEQUENCE CLEAVAGE SITE</scope>
    <scope>VARIANT CYS-23</scope>
</reference>
<reference evidence="31 32" key="18">
    <citation type="journal article" date="2018" name="Cell">
        <title>5-HT2C receptor structures reveal the structural basis of GPCR polypharmacology.</title>
        <authorList>
            <person name="Peng Y."/>
            <person name="McCorvy J.D."/>
            <person name="Harpsoee K."/>
            <person name="Lansu K."/>
            <person name="Yuan S."/>
            <person name="Popov P."/>
            <person name="Qu L."/>
            <person name="Pu M."/>
            <person name="Che T."/>
            <person name="Nikolajsen L.F."/>
            <person name="Huang X.P."/>
            <person name="Wu Y."/>
            <person name="Shen L."/>
            <person name="Bjoern-Yoshimoto W.E."/>
            <person name="Ding K."/>
            <person name="Wacker D."/>
            <person name="Han G.W."/>
            <person name="Cheng J."/>
            <person name="Katritch V."/>
            <person name="Jensen A.A."/>
            <person name="Hanson M.A."/>
            <person name="Zhao S."/>
            <person name="Gloriam D.E."/>
            <person name="Roth B.L."/>
            <person name="Stevens R.C."/>
            <person name="Liu Z.J."/>
        </authorList>
    </citation>
    <scope>X-RAY CRYSTALLOGRAPHY (2.7 ANGSTROMS) OF 40-245 AND 303-393 IN COMPLEX WITH ERGOTAMINE</scope>
    <scope>FUNCTION</scope>
    <scope>DISULFIDE BONDS</scope>
    <scope>ACTIVITY REGULATION</scope>
    <scope>MUTAGENESIS OF GLY-218; PHE-223; PHE-320; TRP-324 AND VAL-354</scope>
</reference>
<reference key="19">
    <citation type="journal article" date="1995" name="Genomics">
        <title>Identification, expression, and pharmacology of a Cys23-Ser23 substitution in the human 5-HT2c receptor gene (HTR2C).</title>
        <authorList>
            <person name="Lappalainen J."/>
            <person name="Zhang L."/>
            <person name="Dean M."/>
            <person name="Oz M."/>
            <person name="Ozaki N."/>
            <person name="Yu D."/>
            <person name="Virkkunen M."/>
            <person name="Weight F."/>
            <person name="Linnoila M."/>
            <person name="Goldman D."/>
        </authorList>
    </citation>
    <scope>VARIANT CYS-23</scope>
</reference>
<reference key="20">
    <citation type="journal article" date="1999" name="Am. J. Med. Genet.">
        <title>Association analysis between a Cys23Ser substitution polymorphism of the human 5-HT2c receptor gene and neuronal hyperexcitability.</title>
        <authorList>
            <person name="Samochowiec J."/>
            <person name="Smolka M."/>
            <person name="Winterer G."/>
            <person name="Rommelspacher H."/>
            <person name="Schmidt L.G."/>
            <person name="Sander T."/>
        </authorList>
    </citation>
    <scope>VARIANT CYS-23</scope>
</reference>
<reference key="21">
    <citation type="journal article" date="1999" name="Am. J. Med. Genet.">
        <title>Unified approach to the analysis of genetic variation in serotonergic pathways.</title>
        <authorList>
            <person name="Marshall S.E."/>
            <person name="Bird T.G."/>
            <person name="Hart K."/>
            <person name="Welsh K.I."/>
        </authorList>
    </citation>
    <scope>VARIANT CYS-23</scope>
</reference>
<reference key="22">
    <citation type="journal article" date="1999" name="Nat. Genet.">
        <title>Characterization of single-nucleotide polymorphisms in coding regions of human genes.</title>
        <authorList>
            <person name="Cargill M."/>
            <person name="Altshuler D."/>
            <person name="Ireland J."/>
            <person name="Sklar P."/>
            <person name="Ardlie K."/>
            <person name="Patil N."/>
            <person name="Shaw N."/>
            <person name="Lane C.R."/>
            <person name="Lim E.P."/>
            <person name="Kalyanaraman N."/>
            <person name="Nemesh J."/>
            <person name="Ziaugra L."/>
            <person name="Friedland L."/>
            <person name="Rolfe A."/>
            <person name="Warrington J."/>
            <person name="Lipshutz R."/>
            <person name="Daley G.Q."/>
            <person name="Lander E.S."/>
        </authorList>
    </citation>
    <scope>VARIANT CYS-23</scope>
</reference>
<reference key="23">
    <citation type="journal article" date="1999" name="Nat. Genet.">
        <authorList>
            <person name="Cargill M."/>
            <person name="Altshuler D."/>
            <person name="Ireland J."/>
            <person name="Sklar P."/>
            <person name="Ardlie K."/>
            <person name="Patil N."/>
            <person name="Shaw N."/>
            <person name="Lane C.R."/>
            <person name="Lim E.P."/>
            <person name="Kalyanaraman N."/>
            <person name="Nemesh J."/>
            <person name="Ziaugra L."/>
            <person name="Friedland L."/>
            <person name="Rolfe A."/>
            <person name="Warrington J."/>
            <person name="Lipshutz R."/>
            <person name="Daley G.Q."/>
            <person name="Lander E.S."/>
        </authorList>
    </citation>
    <scope>ERRATUM OF PUBMED:10391209</scope>
</reference>
<organism>
    <name type="scientific">Homo sapiens</name>
    <name type="common">Human</name>
    <dbReference type="NCBI Taxonomy" id="9606"/>
    <lineage>
        <taxon>Eukaryota</taxon>
        <taxon>Metazoa</taxon>
        <taxon>Chordata</taxon>
        <taxon>Craniata</taxon>
        <taxon>Vertebrata</taxon>
        <taxon>Euteleostomi</taxon>
        <taxon>Mammalia</taxon>
        <taxon>Eutheria</taxon>
        <taxon>Euarchontoglires</taxon>
        <taxon>Primates</taxon>
        <taxon>Haplorrhini</taxon>
        <taxon>Catarrhini</taxon>
        <taxon>Hominidae</taxon>
        <taxon>Homo</taxon>
    </lineage>
</organism>
<name>5HT2C_HUMAN</name>
<dbReference type="EMBL" id="M81778">
    <property type="protein sequence ID" value="AAA60317.1"/>
    <property type="molecule type" value="mRNA"/>
</dbReference>
<dbReference type="EMBL" id="X80763">
    <property type="protein sequence ID" value="CAB59978.1"/>
    <property type="molecule type" value="Genomic_DNA"/>
</dbReference>
<dbReference type="EMBL" id="U49516">
    <property type="protein sequence ID" value="AAB40898.1"/>
    <property type="molecule type" value="mRNA"/>
</dbReference>
<dbReference type="EMBL" id="AF208053">
    <property type="protein sequence ID" value="AAF35842.1"/>
    <property type="molecule type" value="mRNA"/>
</dbReference>
<dbReference type="EMBL" id="AF498983">
    <property type="protein sequence ID" value="AAM21130.1"/>
    <property type="molecule type" value="mRNA"/>
</dbReference>
<dbReference type="EMBL" id="AK295753">
    <property type="protein sequence ID" value="BAG58583.1"/>
    <property type="molecule type" value="mRNA"/>
</dbReference>
<dbReference type="EMBL" id="AC233299">
    <property type="status" value="NOT_ANNOTATED_CDS"/>
    <property type="molecule type" value="Genomic_DNA"/>
</dbReference>
<dbReference type="EMBL" id="AL590097">
    <property type="status" value="NOT_ANNOTATED_CDS"/>
    <property type="molecule type" value="Genomic_DNA"/>
</dbReference>
<dbReference type="EMBL" id="AL355812">
    <property type="status" value="NOT_ANNOTATED_CDS"/>
    <property type="molecule type" value="Genomic_DNA"/>
</dbReference>
<dbReference type="EMBL" id="BC095543">
    <property type="protein sequence ID" value="AAH95543.1"/>
    <property type="molecule type" value="mRNA"/>
</dbReference>
<dbReference type="CCDS" id="CCDS14564.1">
    <molecule id="P28335-1"/>
</dbReference>
<dbReference type="CCDS" id="CCDS59174.1">
    <molecule id="P28335-2"/>
</dbReference>
<dbReference type="PIR" id="JS0616">
    <property type="entry name" value="JS0616"/>
</dbReference>
<dbReference type="RefSeq" id="NP_000859.2">
    <molecule id="P28335-1"/>
    <property type="nucleotide sequence ID" value="NM_000868.4"/>
</dbReference>
<dbReference type="RefSeq" id="NP_001243689.2">
    <molecule id="P28335-1"/>
    <property type="nucleotide sequence ID" value="NM_001256760.3"/>
</dbReference>
<dbReference type="RefSeq" id="NP_001243690.2">
    <molecule id="P28335-2"/>
    <property type="nucleotide sequence ID" value="NM_001256761.3"/>
</dbReference>
<dbReference type="PDB" id="6BQG">
    <property type="method" value="X-ray"/>
    <property type="resolution" value="3.00 A"/>
    <property type="chains" value="A=40-245, A=301-393"/>
</dbReference>
<dbReference type="PDB" id="6BQH">
    <property type="method" value="X-ray"/>
    <property type="resolution" value="2.70 A"/>
    <property type="chains" value="A=40-245, A=301-393"/>
</dbReference>
<dbReference type="PDB" id="8DPF">
    <property type="method" value="EM"/>
    <property type="resolution" value="2.84 A"/>
    <property type="chains" value="A=1-458"/>
</dbReference>
<dbReference type="PDB" id="8DPG">
    <property type="method" value="EM"/>
    <property type="resolution" value="3.60 A"/>
    <property type="chains" value="A=1-458"/>
</dbReference>
<dbReference type="PDB" id="8DPH">
    <property type="method" value="EM"/>
    <property type="resolution" value="3.20 A"/>
    <property type="chains" value="A=1-458"/>
</dbReference>
<dbReference type="PDB" id="8DPI">
    <property type="method" value="EM"/>
    <property type="resolution" value="3.40 A"/>
    <property type="chains" value="A=1-458"/>
</dbReference>
<dbReference type="PDB" id="8ZMF">
    <property type="method" value="X-ray"/>
    <property type="resolution" value="3.60 A"/>
    <property type="chains" value="A=40-245, A=301-393"/>
</dbReference>
<dbReference type="PDBsum" id="6BQG"/>
<dbReference type="PDBsum" id="6BQH"/>
<dbReference type="PDBsum" id="8DPF"/>
<dbReference type="PDBsum" id="8DPG"/>
<dbReference type="PDBsum" id="8DPH"/>
<dbReference type="PDBsum" id="8DPI"/>
<dbReference type="PDBsum" id="8ZMF"/>
<dbReference type="EMDB" id="EMD-27633"/>
<dbReference type="EMDB" id="EMD-27634"/>
<dbReference type="EMDB" id="EMD-27635"/>
<dbReference type="EMDB" id="EMD-27636"/>
<dbReference type="SMR" id="P28335"/>
<dbReference type="BioGRID" id="109590">
    <property type="interactions" value="140"/>
</dbReference>
<dbReference type="CORUM" id="P28335"/>
<dbReference type="FunCoup" id="P28335">
    <property type="interactions" value="904"/>
</dbReference>
<dbReference type="IntAct" id="P28335">
    <property type="interactions" value="131"/>
</dbReference>
<dbReference type="MINT" id="P28335"/>
<dbReference type="STRING" id="9606.ENSP00000276198"/>
<dbReference type="BindingDB" id="P28335"/>
<dbReference type="ChEMBL" id="CHEMBL225"/>
<dbReference type="DrugBank" id="DB13940">
    <property type="generic name" value="2,5-Dimethoxy-4-ethylthioamphetamine"/>
</dbReference>
<dbReference type="DrugBank" id="DB01537">
    <property type="generic name" value="4-Bromo-2,5-dimethoxyphenethylamine"/>
</dbReference>
<dbReference type="DrugBank" id="DB14010">
    <property type="generic name" value="5-methoxy-N,N-dimethyltryptamine"/>
</dbReference>
<dbReference type="DrugBank" id="DB06594">
    <property type="generic name" value="Agomelatine"/>
</dbReference>
<dbReference type="DrugBank" id="DB00321">
    <property type="generic name" value="Amitriptyline"/>
</dbReference>
<dbReference type="DrugBank" id="DB00543">
    <property type="generic name" value="Amoxapine"/>
</dbReference>
<dbReference type="DrugBank" id="DB00714">
    <property type="generic name" value="Apomorphine"/>
</dbReference>
<dbReference type="DrugBank" id="DB01238">
    <property type="generic name" value="Aripiprazole"/>
</dbReference>
<dbReference type="DrugBank" id="DB14185">
    <property type="generic name" value="Aripiprazole lauroxil"/>
</dbReference>
<dbReference type="DrugBank" id="DB06216">
    <property type="generic name" value="Asenapine"/>
</dbReference>
<dbReference type="DrugBank" id="DB06008">
    <property type="generic name" value="ATHX-105"/>
</dbReference>
<dbReference type="DrugBank" id="DB01200">
    <property type="generic name" value="Bromocriptine"/>
</dbReference>
<dbReference type="DrugBank" id="DB00248">
    <property type="generic name" value="Cabergoline"/>
</dbReference>
<dbReference type="DrugBank" id="DB09014">
    <property type="generic name" value="Captodiame"/>
</dbReference>
<dbReference type="DrugBank" id="DB06016">
    <property type="generic name" value="Cariprazine"/>
</dbReference>
<dbReference type="DrugBank" id="DB00477">
    <property type="generic name" value="Chlorpromazine"/>
</dbReference>
<dbReference type="DrugBank" id="DB01239">
    <property type="generic name" value="Chlorprothixene"/>
</dbReference>
<dbReference type="DrugBank" id="DB01242">
    <property type="generic name" value="Clomipramine"/>
</dbReference>
<dbReference type="DrugBank" id="DB15971">
    <property type="generic name" value="Clorotepine"/>
</dbReference>
<dbReference type="DrugBank" id="DB00363">
    <property type="generic name" value="Clozapine"/>
</dbReference>
<dbReference type="DrugBank" id="DB09000">
    <property type="generic name" value="Cyamemazine"/>
</dbReference>
<dbReference type="DrugBank" id="DB00924">
    <property type="generic name" value="Cyclobenzaprine"/>
</dbReference>
<dbReference type="DrugBank" id="DB00434">
    <property type="generic name" value="Cyproheptadine"/>
</dbReference>
<dbReference type="DrugBank" id="DB04884">
    <property type="generic name" value="Dapoxetine"/>
</dbReference>
<dbReference type="DrugBank" id="DB06512">
    <property type="generic name" value="Deramciclane"/>
</dbReference>
<dbReference type="DrugBank" id="DB01151">
    <property type="generic name" value="Desipramine"/>
</dbReference>
<dbReference type="DrugBank" id="DB01191">
    <property type="generic name" value="Dexfenfluramine"/>
</dbReference>
<dbReference type="DrugBank" id="DB11273">
    <property type="generic name" value="Dihydroergocornine"/>
</dbReference>
<dbReference type="DrugBank" id="DB13345">
    <property type="generic name" value="Dihydroergocristine"/>
</dbReference>
<dbReference type="DrugBank" id="DB00320">
    <property type="generic name" value="Dihydroergotamine"/>
</dbReference>
<dbReference type="DrugBank" id="DB06446">
    <property type="generic name" value="Dotarizine"/>
</dbReference>
<dbReference type="DrugBank" id="DB01142">
    <property type="generic name" value="Doxepin"/>
</dbReference>
<dbReference type="DrugBank" id="DB12883">
    <property type="generic name" value="Eltoprazine"/>
</dbReference>
<dbReference type="DrugBank" id="DB05492">
    <property type="generic name" value="Epicept NP-1"/>
</dbReference>
<dbReference type="DrugBank" id="DB12177">
    <property type="generic name" value="Eplivanserin"/>
</dbReference>
<dbReference type="DrugBank" id="DB01049">
    <property type="generic name" value="Ergoloid mesylate"/>
</dbReference>
<dbReference type="DrugBank" id="DB00696">
    <property type="generic name" value="Ergotamine"/>
</dbReference>
<dbReference type="DrugBank" id="DB01175">
    <property type="generic name" value="Escitalopram"/>
</dbReference>
<dbReference type="DrugBank" id="DB06678">
    <property type="generic name" value="Esmirtazapine"/>
</dbReference>
<dbReference type="DrugBank" id="DB09194">
    <property type="generic name" value="Etoperidone"/>
</dbReference>
<dbReference type="DrugBank" id="DB00574">
    <property type="generic name" value="Fenfluramine"/>
</dbReference>
<dbReference type="DrugBank" id="DB00472">
    <property type="generic name" value="Fluoxetine"/>
</dbReference>
<dbReference type="DrugBank" id="DB00875">
    <property type="generic name" value="Flupentixol"/>
</dbReference>
<dbReference type="DrugBank" id="DB00623">
    <property type="generic name" value="Fluphenazine"/>
</dbReference>
<dbReference type="DrugBank" id="DB12141">
    <property type="generic name" value="Gilteritinib"/>
</dbReference>
<dbReference type="DrugBank" id="DB00502">
    <property type="generic name" value="Haloperidol"/>
</dbReference>
<dbReference type="DrugBank" id="DB04946">
    <property type="generic name" value="Iloperidone"/>
</dbReference>
<dbReference type="DrugBank" id="DB00458">
    <property type="generic name" value="Imipramine"/>
</dbReference>
<dbReference type="DrugBank" id="DB01221">
    <property type="generic name" value="Ketamine"/>
</dbReference>
<dbReference type="DrugBank" id="DB00589">
    <property type="generic name" value="Lisuride"/>
</dbReference>
<dbReference type="DrugBank" id="DB04948">
    <property type="generic name" value="Lofexidine"/>
</dbReference>
<dbReference type="DrugBank" id="DB04871">
    <property type="generic name" value="Lorcaserin"/>
</dbReference>
<dbReference type="DrugBank" id="DB09195">
    <property type="generic name" value="Lorpiprazole"/>
</dbReference>
<dbReference type="DrugBank" id="DB00408">
    <property type="generic name" value="Loxapine"/>
</dbReference>
<dbReference type="DrugBank" id="DB12110">
    <property type="generic name" value="m-Chlorophenylpiperazine"/>
</dbReference>
<dbReference type="DrugBank" id="DB00934">
    <property type="generic name" value="Maprotiline"/>
</dbReference>
<dbReference type="DrugBank" id="DB13520">
    <property type="generic name" value="Metergoline"/>
</dbReference>
<dbReference type="DrugBank" id="DB01403">
    <property type="generic name" value="Methotrimeprazine"/>
</dbReference>
<dbReference type="DrugBank" id="DB00247">
    <property type="generic name" value="Methysergide"/>
</dbReference>
<dbReference type="DrugBank" id="DB06148">
    <property type="generic name" value="Mianserin"/>
</dbReference>
<dbReference type="DrugBank" id="DB01454">
    <property type="generic name" value="Midomafetamine"/>
</dbReference>
<dbReference type="DrugBank" id="DB00805">
    <property type="generic name" value="Minaprine"/>
</dbReference>
<dbReference type="DrugBank" id="DB00370">
    <property type="generic name" value="Mirtazapine"/>
</dbReference>
<dbReference type="DrugBank" id="DB12111">
    <property type="generic name" value="MK-212"/>
</dbReference>
<dbReference type="DrugBank" id="DB08804">
    <property type="generic name" value="Nandrolone decanoate"/>
</dbReference>
<dbReference type="DrugBank" id="DB01149">
    <property type="generic name" value="Nefazodone"/>
</dbReference>
<dbReference type="DrugBank" id="DB00540">
    <property type="generic name" value="Nortriptyline"/>
</dbReference>
<dbReference type="DrugBank" id="DB06229">
    <property type="generic name" value="Ocaperidone"/>
</dbReference>
<dbReference type="DrugBank" id="DB00334">
    <property type="generic name" value="Olanzapine"/>
</dbReference>
<dbReference type="DrugBank" id="DB01267">
    <property type="generic name" value="Paliperidone"/>
</dbReference>
<dbReference type="DrugBank" id="DB00715">
    <property type="generic name" value="Paroxetine"/>
</dbReference>
<dbReference type="DrugBank" id="DB01186">
    <property type="generic name" value="Pergolide"/>
</dbReference>
<dbReference type="DrugBank" id="DB05316">
    <property type="generic name" value="Pimavanserin"/>
</dbReference>
<dbReference type="DrugBank" id="DB06153">
    <property type="generic name" value="Pizotifen"/>
</dbReference>
<dbReference type="DrugBank" id="DB00420">
    <property type="generic name" value="Promazine"/>
</dbReference>
<dbReference type="DrugBank" id="DB00777">
    <property type="generic name" value="Propiomazine"/>
</dbReference>
<dbReference type="DrugBank" id="DB12290">
    <property type="generic name" value="Puerarin"/>
</dbReference>
<dbReference type="DrugBank" id="DB01224">
    <property type="generic name" value="Quetiapine"/>
</dbReference>
<dbReference type="DrugBank" id="DB00734">
    <property type="generic name" value="Risperidone"/>
</dbReference>
<dbReference type="DrugBank" id="DB12693">
    <property type="generic name" value="Ritanserin"/>
</dbReference>
<dbReference type="DrugBank" id="DB12163">
    <property type="generic name" value="Sarpogrelate"/>
</dbReference>
<dbReference type="DrugBank" id="DB08839">
    <property type="generic name" value="Serotonin"/>
</dbReference>
<dbReference type="DrugBank" id="DB06144">
    <property type="generic name" value="Sertindole"/>
</dbReference>
<dbReference type="DrugBank" id="DB09304">
    <property type="generic name" value="Setiptiline"/>
</dbReference>
<dbReference type="DrugBank" id="DB12641">
    <property type="generic name" value="Tedatioxetine"/>
</dbReference>
<dbReference type="DrugBank" id="DB01079">
    <property type="generic name" value="Tegaserod"/>
</dbReference>
<dbReference type="DrugBank" id="DB13025">
    <property type="generic name" value="Tiapride"/>
</dbReference>
<dbReference type="DrugBank" id="DB00193">
    <property type="generic name" value="Tramadol"/>
</dbReference>
<dbReference type="DrugBank" id="DB00656">
    <property type="generic name" value="Trazodone"/>
</dbReference>
<dbReference type="DrugBank" id="DB00726">
    <property type="generic name" value="Trimipramine"/>
</dbReference>
<dbReference type="DrugBank" id="DB12071">
    <property type="generic name" value="Vabicaserin"/>
</dbReference>
<dbReference type="DrugBank" id="DB09185">
    <property type="generic name" value="Viloxazine"/>
</dbReference>
<dbReference type="DrugBank" id="DB16351">
    <property type="generic name" value="Volinanserin"/>
</dbReference>
<dbReference type="DrugBank" id="DB01392">
    <property type="generic name" value="Yohimbine"/>
</dbReference>
<dbReference type="DrugBank" id="DB00246">
    <property type="generic name" value="Ziprasidone"/>
</dbReference>
<dbReference type="DrugCentral" id="P28335"/>
<dbReference type="GuidetoPHARMACOLOGY" id="8"/>
<dbReference type="GlyCosmos" id="P28335">
    <property type="glycosylation" value="1 site, No reported glycans"/>
</dbReference>
<dbReference type="GlyGen" id="P28335">
    <property type="glycosylation" value="2 sites"/>
</dbReference>
<dbReference type="iPTMnet" id="P28335"/>
<dbReference type="PhosphoSitePlus" id="P28335"/>
<dbReference type="BioMuta" id="HTR2C"/>
<dbReference type="DMDM" id="112816"/>
<dbReference type="MassIVE" id="P28335"/>
<dbReference type="PaxDb" id="9606-ENSP00000276198"/>
<dbReference type="PeptideAtlas" id="P28335"/>
<dbReference type="Antibodypedia" id="527">
    <property type="antibodies" value="497 antibodies from 36 providers"/>
</dbReference>
<dbReference type="DNASU" id="3358"/>
<dbReference type="Ensembl" id="ENST00000276198.6">
    <molecule id="P28335-1"/>
    <property type="protein sequence ID" value="ENSP00000276198.1"/>
    <property type="gene ID" value="ENSG00000147246.10"/>
</dbReference>
<dbReference type="Ensembl" id="ENST00000371950.3">
    <molecule id="P28335-2"/>
    <property type="protein sequence ID" value="ENSP00000361018.3"/>
    <property type="gene ID" value="ENSG00000147246.10"/>
</dbReference>
<dbReference type="Ensembl" id="ENST00000371951.5">
    <molecule id="P28335-1"/>
    <property type="protein sequence ID" value="ENSP00000361019.1"/>
    <property type="gene ID" value="ENSG00000147246.10"/>
</dbReference>
<dbReference type="GeneID" id="3358"/>
<dbReference type="KEGG" id="hsa:3358"/>
<dbReference type="MANE-Select" id="ENST00000276198.6">
    <property type="protein sequence ID" value="ENSP00000276198.1"/>
    <property type="RefSeq nucleotide sequence ID" value="NM_000868.4"/>
    <property type="RefSeq protein sequence ID" value="NP_000859.2"/>
</dbReference>
<dbReference type="UCSC" id="uc004epu.1">
    <molecule id="P28335-1"/>
    <property type="organism name" value="human"/>
</dbReference>
<dbReference type="AGR" id="HGNC:5295"/>
<dbReference type="CTD" id="3358"/>
<dbReference type="DisGeNET" id="3358"/>
<dbReference type="GeneCards" id="HTR2C"/>
<dbReference type="HGNC" id="HGNC:5295">
    <property type="gene designation" value="HTR2C"/>
</dbReference>
<dbReference type="HPA" id="ENSG00000147246">
    <property type="expression patterns" value="Group enriched (brain, choroid plexus)"/>
</dbReference>
<dbReference type="MalaCards" id="HTR2C"/>
<dbReference type="MIM" id="312861">
    <property type="type" value="gene"/>
</dbReference>
<dbReference type="neXtProt" id="NX_P28335"/>
<dbReference type="OpenTargets" id="ENSG00000147246"/>
<dbReference type="PharmGKB" id="PA194"/>
<dbReference type="VEuPathDB" id="HostDB:ENSG00000147246"/>
<dbReference type="eggNOG" id="KOG3656">
    <property type="taxonomic scope" value="Eukaryota"/>
</dbReference>
<dbReference type="GeneTree" id="ENSGT01050000244937"/>
<dbReference type="HOGENOM" id="CLU_009579_11_3_1"/>
<dbReference type="InParanoid" id="P28335"/>
<dbReference type="OMA" id="YRNGNEF"/>
<dbReference type="OrthoDB" id="420518at2759"/>
<dbReference type="PAN-GO" id="P28335">
    <property type="GO annotations" value="8 GO annotations based on evolutionary models"/>
</dbReference>
<dbReference type="PhylomeDB" id="P28335"/>
<dbReference type="TreeFam" id="TF316350"/>
<dbReference type="PathwayCommons" id="P28335"/>
<dbReference type="Reactome" id="R-HSA-390666">
    <property type="pathway name" value="Serotonin receptors"/>
</dbReference>
<dbReference type="Reactome" id="R-HSA-416476">
    <property type="pathway name" value="G alpha (q) signalling events"/>
</dbReference>
<dbReference type="SignaLink" id="P28335"/>
<dbReference type="SIGNOR" id="P28335"/>
<dbReference type="BioGRID-ORCS" id="3358">
    <property type="hits" value="12 hits in 777 CRISPR screens"/>
</dbReference>
<dbReference type="ChiTaRS" id="HTR2C">
    <property type="organism name" value="human"/>
</dbReference>
<dbReference type="GeneWiki" id="5-HT2C_receptor"/>
<dbReference type="GenomeRNAi" id="3358"/>
<dbReference type="Pharos" id="P28335">
    <property type="development level" value="Tclin"/>
</dbReference>
<dbReference type="PRO" id="PR:P28335"/>
<dbReference type="Proteomes" id="UP000005640">
    <property type="component" value="Chromosome X"/>
</dbReference>
<dbReference type="RNAct" id="P28335">
    <property type="molecule type" value="protein"/>
</dbReference>
<dbReference type="Bgee" id="ENSG00000147246">
    <property type="expression patterns" value="Expressed in choroid plexus epithelium and 55 other cell types or tissues"/>
</dbReference>
<dbReference type="GO" id="GO:0030425">
    <property type="term" value="C:dendrite"/>
    <property type="evidence" value="ECO:0000318"/>
    <property type="project" value="GO_Central"/>
</dbReference>
<dbReference type="GO" id="GO:0098666">
    <property type="term" value="C:G protein-coupled serotonin receptor complex"/>
    <property type="evidence" value="ECO:0000314"/>
    <property type="project" value="UniProtKB"/>
</dbReference>
<dbReference type="GO" id="GO:0005886">
    <property type="term" value="C:plasma membrane"/>
    <property type="evidence" value="ECO:0000314"/>
    <property type="project" value="UniProtKB"/>
</dbReference>
<dbReference type="GO" id="GO:0045202">
    <property type="term" value="C:synapse"/>
    <property type="evidence" value="ECO:0007669"/>
    <property type="project" value="GOC"/>
</dbReference>
<dbReference type="GO" id="GO:0071886">
    <property type="term" value="F:1-(4-iodo-2,5-dimethoxyphenyl)propan-2-amine binding"/>
    <property type="evidence" value="ECO:0000314"/>
    <property type="project" value="UniProtKB"/>
</dbReference>
<dbReference type="GO" id="GO:0004993">
    <property type="term" value="F:G protein-coupled serotonin receptor activity"/>
    <property type="evidence" value="ECO:0000314"/>
    <property type="project" value="UniProtKB"/>
</dbReference>
<dbReference type="GO" id="GO:0001587">
    <property type="term" value="F:Gq/11-coupled serotonin receptor activity"/>
    <property type="evidence" value="ECO:0000314"/>
    <property type="project" value="UniProtKB"/>
</dbReference>
<dbReference type="GO" id="GO:0042802">
    <property type="term" value="F:identical protein binding"/>
    <property type="evidence" value="ECO:0000353"/>
    <property type="project" value="IntAct"/>
</dbReference>
<dbReference type="GO" id="GO:0030594">
    <property type="term" value="F:neurotransmitter receptor activity"/>
    <property type="evidence" value="ECO:0000318"/>
    <property type="project" value="GO_Central"/>
</dbReference>
<dbReference type="GO" id="GO:0051378">
    <property type="term" value="F:serotonin binding"/>
    <property type="evidence" value="ECO:0000314"/>
    <property type="project" value="UniProtKB"/>
</dbReference>
<dbReference type="GO" id="GO:0099589">
    <property type="term" value="F:serotonin receptor activity"/>
    <property type="evidence" value="ECO:0000314"/>
    <property type="project" value="UniProt"/>
</dbReference>
<dbReference type="GO" id="GO:0001662">
    <property type="term" value="P:behavioral fear response"/>
    <property type="evidence" value="ECO:0000250"/>
    <property type="project" value="UniProtKB"/>
</dbReference>
<dbReference type="GO" id="GO:0019934">
    <property type="term" value="P:cGMP-mediated signaling"/>
    <property type="evidence" value="ECO:0000314"/>
    <property type="project" value="UniProtKB"/>
</dbReference>
<dbReference type="GO" id="GO:0007268">
    <property type="term" value="P:chemical synaptic transmission"/>
    <property type="evidence" value="ECO:0000318"/>
    <property type="project" value="GO_Central"/>
</dbReference>
<dbReference type="GO" id="GO:0007631">
    <property type="term" value="P:feeding behavior"/>
    <property type="evidence" value="ECO:0000250"/>
    <property type="project" value="UniProtKB"/>
</dbReference>
<dbReference type="GO" id="GO:0007187">
    <property type="term" value="P:G protein-coupled receptor signaling pathway, coupled to cyclic nucleotide second messenger"/>
    <property type="evidence" value="ECO:0000318"/>
    <property type="project" value="GO_Central"/>
</dbReference>
<dbReference type="GO" id="GO:0098664">
    <property type="term" value="P:G protein-coupled serotonin receptor signaling pathway"/>
    <property type="evidence" value="ECO:0000314"/>
    <property type="project" value="UniProtKB"/>
</dbReference>
<dbReference type="GO" id="GO:0006874">
    <property type="term" value="P:intracellular calcium ion homeostasis"/>
    <property type="evidence" value="ECO:0000314"/>
    <property type="project" value="UniProtKB"/>
</dbReference>
<dbReference type="GO" id="GO:0007626">
    <property type="term" value="P:locomotory behavior"/>
    <property type="evidence" value="ECO:0007669"/>
    <property type="project" value="InterPro"/>
</dbReference>
<dbReference type="GO" id="GO:0007200">
    <property type="term" value="P:phospholipase C-activating G protein-coupled receptor signaling pathway"/>
    <property type="evidence" value="ECO:0000250"/>
    <property type="project" value="UniProtKB"/>
</dbReference>
<dbReference type="GO" id="GO:0007208">
    <property type="term" value="P:phospholipase C-activating serotonin receptor signaling pathway"/>
    <property type="evidence" value="ECO:0000314"/>
    <property type="project" value="UniProtKB"/>
</dbReference>
<dbReference type="GO" id="GO:0050850">
    <property type="term" value="P:positive regulation of calcium-mediated signaling"/>
    <property type="evidence" value="ECO:0007669"/>
    <property type="project" value="Ensembl"/>
</dbReference>
<dbReference type="GO" id="GO:0070374">
    <property type="term" value="P:positive regulation of ERK1 and ERK2 cascade"/>
    <property type="evidence" value="ECO:0000314"/>
    <property type="project" value="UniProtKB"/>
</dbReference>
<dbReference type="GO" id="GO:0045600">
    <property type="term" value="P:positive regulation of fat cell differentiation"/>
    <property type="evidence" value="ECO:0007669"/>
    <property type="project" value="Ensembl"/>
</dbReference>
<dbReference type="GO" id="GO:0010513">
    <property type="term" value="P:positive regulation of phosphatidylinositol biosynthetic process"/>
    <property type="evidence" value="ECO:0000314"/>
    <property type="project" value="UniProtKB"/>
</dbReference>
<dbReference type="GO" id="GO:0032098">
    <property type="term" value="P:regulation of appetite"/>
    <property type="evidence" value="ECO:0000250"/>
    <property type="project" value="UniProtKB"/>
</dbReference>
<dbReference type="GO" id="GO:0043397">
    <property type="term" value="P:regulation of corticotropin-releasing hormone secretion"/>
    <property type="evidence" value="ECO:0000250"/>
    <property type="project" value="UniProtKB"/>
</dbReference>
<dbReference type="GO" id="GO:0031644">
    <property type="term" value="P:regulation of nervous system process"/>
    <property type="evidence" value="ECO:0000250"/>
    <property type="project" value="UniProtKB"/>
</dbReference>
<dbReference type="GO" id="GO:0051209">
    <property type="term" value="P:release of sequestered calcium ion into cytosol"/>
    <property type="evidence" value="ECO:0000315"/>
    <property type="project" value="UniProtKB"/>
</dbReference>
<dbReference type="GO" id="GO:0007210">
    <property type="term" value="P:serotonin receptor signaling pathway"/>
    <property type="evidence" value="ECO:0000318"/>
    <property type="project" value="GO_Central"/>
</dbReference>
<dbReference type="CDD" id="cd15305">
    <property type="entry name" value="7tmA_5-HT2C"/>
    <property type="match status" value="1"/>
</dbReference>
<dbReference type="Gene3D" id="1.20.1070.10">
    <property type="entry name" value="Rhodopsin 7-helix transmembrane proteins"/>
    <property type="match status" value="1"/>
</dbReference>
<dbReference type="InterPro" id="IPR000377">
    <property type="entry name" value="5HT2C_rcpt"/>
</dbReference>
<dbReference type="InterPro" id="IPR002231">
    <property type="entry name" value="5HT_rcpt"/>
</dbReference>
<dbReference type="InterPro" id="IPR000276">
    <property type="entry name" value="GPCR_Rhodpsn"/>
</dbReference>
<dbReference type="InterPro" id="IPR017452">
    <property type="entry name" value="GPCR_Rhodpsn_7TM"/>
</dbReference>
<dbReference type="PANTHER" id="PTHR24247">
    <property type="entry name" value="5-HYDROXYTRYPTAMINE RECEPTOR"/>
    <property type="match status" value="1"/>
</dbReference>
<dbReference type="PANTHER" id="PTHR24247:SF32">
    <property type="entry name" value="5-HYDROXYTRYPTAMINE RECEPTOR 2C"/>
    <property type="match status" value="1"/>
</dbReference>
<dbReference type="Pfam" id="PF00001">
    <property type="entry name" value="7tm_1"/>
    <property type="match status" value="1"/>
</dbReference>
<dbReference type="PRINTS" id="PR00517">
    <property type="entry name" value="5HT2CRECEPTR"/>
</dbReference>
<dbReference type="PRINTS" id="PR01101">
    <property type="entry name" value="5HTRECEPTOR"/>
</dbReference>
<dbReference type="PRINTS" id="PR00237">
    <property type="entry name" value="GPCRRHODOPSN"/>
</dbReference>
<dbReference type="SMART" id="SM01381">
    <property type="entry name" value="7TM_GPCR_Srsx"/>
    <property type="match status" value="1"/>
</dbReference>
<dbReference type="SUPFAM" id="SSF81321">
    <property type="entry name" value="Family A G protein-coupled receptor-like"/>
    <property type="match status" value="1"/>
</dbReference>
<dbReference type="PROSITE" id="PS00237">
    <property type="entry name" value="G_PROTEIN_RECEP_F1_1"/>
    <property type="match status" value="1"/>
</dbReference>
<dbReference type="PROSITE" id="PS50262">
    <property type="entry name" value="G_PROTEIN_RECEP_F1_2"/>
    <property type="match status" value="1"/>
</dbReference>
<feature type="signal peptide" evidence="18">
    <location>
        <begin position="1"/>
        <end position="32"/>
    </location>
</feature>
<feature type="chain" id="PRO_0000068958" description="5-hydroxytryptamine receptor 2C">
    <location>
        <begin position="33"/>
        <end position="458"/>
    </location>
</feature>
<feature type="topological domain" description="Extracellular" evidence="19 30">
    <location>
        <begin position="33"/>
        <end position="55"/>
    </location>
</feature>
<feature type="transmembrane region" description="Helical; Name=1" evidence="19 30">
    <location>
        <begin position="56"/>
        <end position="80"/>
    </location>
</feature>
<feature type="topological domain" description="Cytoplasmic" evidence="19 30">
    <location>
        <begin position="81"/>
        <end position="86"/>
    </location>
</feature>
<feature type="transmembrane region" description="Helical; Name=2" evidence="19 30">
    <location>
        <begin position="87"/>
        <end position="111"/>
    </location>
</feature>
<feature type="topological domain" description="Extracellular" evidence="19 30">
    <location>
        <begin position="112"/>
        <end position="128"/>
    </location>
</feature>
<feature type="transmembrane region" description="Helical; Name=3" evidence="19 30">
    <location>
        <begin position="129"/>
        <end position="151"/>
    </location>
</feature>
<feature type="topological domain" description="Cytoplasmic" evidence="19 30">
    <location>
        <begin position="152"/>
        <end position="167"/>
    </location>
</feature>
<feature type="transmembrane region" description="Helical; Name=4" evidence="19 30">
    <location>
        <begin position="168"/>
        <end position="189"/>
    </location>
</feature>
<feature type="topological domain" description="Extracellular" evidence="19 30">
    <location>
        <begin position="190"/>
        <end position="213"/>
    </location>
</feature>
<feature type="transmembrane region" description="Helical; Name=5" evidence="19 30">
    <location>
        <begin position="214"/>
        <end position="236"/>
    </location>
</feature>
<feature type="topological domain" description="Cytoplasmic" evidence="19 30">
    <location>
        <begin position="237"/>
        <end position="311"/>
    </location>
</feature>
<feature type="transmembrane region" description="Helical; Name=6" evidence="19 30">
    <location>
        <begin position="312"/>
        <end position="336"/>
    </location>
</feature>
<feature type="topological domain" description="Extracellular" evidence="19 30">
    <location>
        <begin position="337"/>
        <end position="347"/>
    </location>
</feature>
<feature type="transmembrane region" description="Helical; Name=7" evidence="19 30">
    <location>
        <begin position="348"/>
        <end position="370"/>
    </location>
</feature>
<feature type="topological domain" description="Cytoplasmic" evidence="19 30">
    <location>
        <begin position="371"/>
        <end position="458"/>
    </location>
</feature>
<feature type="region of interest" description="Disordered" evidence="5">
    <location>
        <begin position="274"/>
        <end position="301"/>
    </location>
</feature>
<feature type="short sequence motif" description="DRY motif; important for ligand-induced conformation changes" evidence="2">
    <location>
        <begin position="151"/>
        <end position="153"/>
    </location>
</feature>
<feature type="short sequence motif" description="NPxxY motif; important for ligand-induced conformation changes and signaling" evidence="2">
    <location>
        <begin position="364"/>
        <end position="368"/>
    </location>
</feature>
<feature type="short sequence motif" description="PDZ-binding">
    <location>
        <begin position="456"/>
        <end position="458"/>
    </location>
</feature>
<feature type="compositionally biased region" description="Basic residues" evidence="5">
    <location>
        <begin position="287"/>
        <end position="297"/>
    </location>
</feature>
<feature type="binding site" evidence="19 30">
    <location>
        <position position="139"/>
    </location>
    <ligand>
        <name>ergotamine</name>
        <dbReference type="ChEBI" id="CHEBI:190463"/>
        <note>agonist</note>
    </ligand>
</feature>
<feature type="binding site" evidence="19 30">
    <location>
        <position position="209"/>
    </location>
    <ligand>
        <name>ergotamine</name>
        <dbReference type="ChEBI" id="CHEBI:190463"/>
        <note>agonist</note>
    </ligand>
</feature>
<feature type="glycosylation site" description="N-linked (GlcNAc...) asparagine" evidence="3">
    <location>
        <position position="39"/>
    </location>
</feature>
<feature type="glycosylation site" description="N-linked (GlcNAc...) asparagine" evidence="3">
    <location>
        <position position="204"/>
    </location>
</feature>
<feature type="disulfide bond" evidence="4 19 30">
    <location>
        <begin position="127"/>
        <end position="207"/>
    </location>
</feature>
<feature type="disulfide bond" evidence="4 19 30">
    <location>
        <begin position="337"/>
        <end position="341"/>
    </location>
</feature>
<feature type="splice variant" id="VSP_045171" description="In isoform 2." evidence="25">
    <original>YVAIRNPIEHSRFNSRTKAIMKIAIVWAISIGVSVPIPVIGLRDEEKVFVNNTTCVLNDPNFVLIGSFVAFFIPLTIMVITYCLTIYVLRRQALMLLHGHTEEPPGLSLDFLKCCKRNTAEEENSANPNQDQNARRRKKKERRPRGTMQAINNERKASKVLGIVFFVFLIMWCPFFITNILSVLCEKSCNQKLMEKLLNVFVWIGYVCSGINPLVYTLFNKIYRRAFSNYLRCNYKVEKKPPVRQIPRVAATALSGRELNVNIYRHTNEPVIEKASDNEPGIEMQVENLELPVNPSSVVSERISSV</original>
    <variation>CISSYPCDWTEGRRKGVREQHDVRAQRPKFRSYWVLRSFLHTADDYGDYVLPDHLRSAPTSFDVTARPHRGTAWTKSGFPEVLQEEYGRGRELCKP</variation>
    <location>
        <begin position="153"/>
        <end position="458"/>
    </location>
</feature>
<feature type="sequence variant" id="VAR_003450" description="In dbSNP:rs6318." evidence="6 7 8 11 15 18 20 21 22 23 24">
    <original>S</original>
    <variation>C</variation>
    <location>
        <position position="23"/>
    </location>
</feature>
<feature type="sequence variant" id="VAR_010166" description="In RNA edited version.">
    <original>I</original>
    <variation>V</variation>
    <location>
        <position position="156"/>
    </location>
</feature>
<feature type="sequence variant" id="VAR_010167" description="In RNA edited version.">
    <original>N</original>
    <variation>S</variation>
    <location>
        <position position="158"/>
    </location>
</feature>
<feature type="sequence variant" id="VAR_010168" description="In RNA edited version; dbSNP:rs781938388.">
    <original>I</original>
    <variation>V</variation>
    <location>
        <position position="160"/>
    </location>
</feature>
<feature type="mutagenesis site" description="Decreases interaction with ARRB2." evidence="13">
    <original>P</original>
    <variation>A</variation>
    <location>
        <position position="159"/>
    </location>
</feature>
<feature type="mutagenesis site" description="Decreased binding to inverse agonist ritanserin." evidence="19">
    <original>G</original>
    <variation>A</variation>
    <variation>S</variation>
    <location>
        <position position="218"/>
    </location>
</feature>
<feature type="mutagenesis site" description="Decreased binding to inverse agonist ritanserin." evidence="19">
    <original>F</original>
    <variation>L</variation>
    <location>
        <position position="223"/>
    </location>
</feature>
<feature type="mutagenesis site" description="Decreased binding to inverse agonist ritanserin." evidence="19">
    <original>F</original>
    <variation>L</variation>
    <location>
        <position position="320"/>
    </location>
</feature>
<feature type="mutagenesis site" description="Decreased binding to inverse agonist ritanserin." evidence="19">
    <original>W</original>
    <variation>L</variation>
    <variation>F</variation>
    <variation>Y</variation>
    <location>
        <position position="324"/>
    </location>
</feature>
<feature type="mutagenesis site" description="Decreased binding to inverse agonist ritanserin." evidence="19">
    <original>V</original>
    <variation>N</variation>
    <location>
        <position position="354"/>
    </location>
</feature>
<feature type="mutagenesis site" description="Loss of interaction with MPDZ." evidence="9">
    <original>S</original>
    <variation>A</variation>
    <location>
        <position position="456"/>
    </location>
</feature>
<feature type="mutagenesis site" description="No effect on interaction with MPDZ." evidence="9">
    <original>S</original>
    <variation>T</variation>
    <location>
        <position position="456"/>
    </location>
</feature>
<feature type="mutagenesis site" description="No effect on interaction with MPDZ." evidence="9">
    <original>S</original>
    <variation>A</variation>
    <location>
        <position position="457"/>
    </location>
</feature>
<feature type="mutagenesis site" description="Loss of interaction with MPDZ." evidence="9">
    <original>V</original>
    <variation>A</variation>
    <location>
        <position position="458"/>
    </location>
</feature>
<feature type="turn" evidence="33">
    <location>
        <begin position="48"/>
        <end position="50"/>
    </location>
</feature>
<feature type="helix" evidence="34">
    <location>
        <begin position="56"/>
        <end position="60"/>
    </location>
</feature>
<feature type="helix" evidence="34">
    <location>
        <begin position="61"/>
        <end position="80"/>
    </location>
</feature>
<feature type="helix" evidence="34">
    <location>
        <begin position="82"/>
        <end position="84"/>
    </location>
</feature>
<feature type="helix" evidence="34">
    <location>
        <begin position="87"/>
        <end position="105"/>
    </location>
</feature>
<feature type="helix" evidence="34">
    <location>
        <begin position="107"/>
        <end position="115"/>
    </location>
</feature>
<feature type="turn" evidence="34">
    <location>
        <begin position="116"/>
        <end position="118"/>
    </location>
</feature>
<feature type="helix" evidence="34">
    <location>
        <begin position="126"/>
        <end position="154"/>
    </location>
</feature>
<feature type="helix" evidence="35">
    <location>
        <begin position="159"/>
        <end position="165"/>
    </location>
</feature>
<feature type="helix" evidence="34">
    <location>
        <begin position="167"/>
        <end position="186"/>
    </location>
</feature>
<feature type="helix" evidence="34">
    <location>
        <begin position="188"/>
        <end position="195"/>
    </location>
</feature>
<feature type="helix" evidence="34">
    <location>
        <begin position="197"/>
        <end position="199"/>
    </location>
</feature>
<feature type="strand" evidence="34">
    <location>
        <begin position="200"/>
        <end position="202"/>
    </location>
</feature>
<feature type="turn" evidence="34">
    <location>
        <begin position="203"/>
        <end position="205"/>
    </location>
</feature>
<feature type="helix" evidence="34">
    <location>
        <begin position="212"/>
        <end position="222"/>
    </location>
</feature>
<feature type="helix" evidence="34">
    <location>
        <begin position="224"/>
        <end position="245"/>
    </location>
</feature>
<feature type="helix" evidence="34">
    <location>
        <begin position="301"/>
        <end position="335"/>
    </location>
</feature>
<feature type="strand" evidence="34">
    <location>
        <begin position="338"/>
        <end position="341"/>
    </location>
</feature>
<feature type="helix" evidence="34">
    <location>
        <begin position="343"/>
        <end position="371"/>
    </location>
</feature>
<feature type="helix" evidence="34">
    <location>
        <begin position="373"/>
        <end position="385"/>
    </location>
</feature>